<gene>
    <name type="primary">cry12Aa</name>
    <name type="synonym">cryVB</name>
    <name type="synonym">cryXIIA(a)</name>
</gene>
<protein>
    <recommendedName>
        <fullName>Pesticidal crystal protein Cry12Aa</fullName>
    </recommendedName>
    <alternativeName>
        <fullName>142 kDa crystal protein</fullName>
    </alternativeName>
    <alternativeName>
        <fullName>Crystaline entomocidal protoxin</fullName>
    </alternativeName>
    <alternativeName>
        <fullName>Insecticidal delta-endotoxin CryXIIA(a)</fullName>
    </alternativeName>
</protein>
<keyword id="KW-0903">Direct protein sequencing</keyword>
<keyword id="KW-0749">Sporulation</keyword>
<keyword id="KW-0800">Toxin</keyword>
<keyword id="KW-0843">Virulence</keyword>
<evidence type="ECO:0000305" key="1"/>
<reference key="1">
    <citation type="patent" date="1991-12-27" number="EP0462721">
        <title>Novel Bacillus thuringiensis microbes active against nematodes, and genes encoding novel nematode-active toxins cloned from Bacillus thuringi.</title>
        <authorList>
            <person name="Narva K.E."/>
            <person name="Payne J.M."/>
            <person name="Schwab G.E."/>
            <person name="Hickle L.A."/>
            <person name="Galasan T."/>
            <person name="Sick A.J."/>
        </authorList>
    </citation>
    <scope>NUCLEOTIDE SEQUENCE [GENOMIC DNA]</scope>
    <scope>PROTEIN SEQUENCE OF 2-11</scope>
    <source>
        <strain>NRRL B-18244 / PS33F2</strain>
    </source>
</reference>
<feature type="chain" id="PRO_0000174085" description="Pesticidal crystal protein Cry12Aa">
    <location>
        <begin position="1"/>
        <end position="1257"/>
    </location>
</feature>
<accession>Q45754</accession>
<dbReference type="EMBL" id="L07027">
    <property type="protein sequence ID" value="AAA22355.1"/>
    <property type="molecule type" value="Genomic_DNA"/>
</dbReference>
<dbReference type="RefSeq" id="WP_127813974.1">
    <property type="nucleotide sequence ID" value="NZ_LDER01000245.1"/>
</dbReference>
<dbReference type="SMR" id="Q45754"/>
<dbReference type="GO" id="GO:0090729">
    <property type="term" value="F:toxin activity"/>
    <property type="evidence" value="ECO:0007669"/>
    <property type="project" value="UniProtKB-KW"/>
</dbReference>
<dbReference type="GO" id="GO:0030435">
    <property type="term" value="P:sporulation resulting in formation of a cellular spore"/>
    <property type="evidence" value="ECO:0007669"/>
    <property type="project" value="UniProtKB-KW"/>
</dbReference>
<dbReference type="GO" id="GO:0001907">
    <property type="term" value="P:symbiont-mediated killing of host cell"/>
    <property type="evidence" value="ECO:0007669"/>
    <property type="project" value="InterPro"/>
</dbReference>
<dbReference type="CDD" id="cd04085">
    <property type="entry name" value="delta_endotoxin_C"/>
    <property type="match status" value="1"/>
</dbReference>
<dbReference type="Gene3D" id="2.60.120.260">
    <property type="entry name" value="Galactose-binding domain-like"/>
    <property type="match status" value="2"/>
</dbReference>
<dbReference type="Gene3D" id="1.20.190.10">
    <property type="entry name" value="Pesticidal crystal protein, N-terminal domain"/>
    <property type="match status" value="1"/>
</dbReference>
<dbReference type="InterPro" id="IPR041587">
    <property type="entry name" value="Cry_V"/>
</dbReference>
<dbReference type="InterPro" id="IPR008979">
    <property type="entry name" value="Galactose-bd-like_sf"/>
</dbReference>
<dbReference type="InterPro" id="IPR038979">
    <property type="entry name" value="Pest_crys"/>
</dbReference>
<dbReference type="InterPro" id="IPR005638">
    <property type="entry name" value="Pest_crys_dom-III"/>
</dbReference>
<dbReference type="InterPro" id="IPR005639">
    <property type="entry name" value="Pest_crys_dom_I"/>
</dbReference>
<dbReference type="InterPro" id="IPR036716">
    <property type="entry name" value="Pest_crys_N_sf"/>
</dbReference>
<dbReference type="PANTHER" id="PTHR37003">
    <property type="entry name" value="ENDOTOXIN_N DOMAIN-CONTAINING PROTEIN-RELATED"/>
    <property type="match status" value="1"/>
</dbReference>
<dbReference type="PANTHER" id="PTHR37003:SF2">
    <property type="entry name" value="PESTICIDAL CRYSTAL PROTEIN N-TERMINAL DOMAIN-CONTAINING PROTEIN"/>
    <property type="match status" value="1"/>
</dbReference>
<dbReference type="Pfam" id="PF17997">
    <property type="entry name" value="Cry1Ac_D5"/>
    <property type="match status" value="1"/>
</dbReference>
<dbReference type="Pfam" id="PF03944">
    <property type="entry name" value="Endotoxin_C"/>
    <property type="match status" value="1"/>
</dbReference>
<dbReference type="Pfam" id="PF03945">
    <property type="entry name" value="Endotoxin_N"/>
    <property type="match status" value="1"/>
</dbReference>
<dbReference type="SUPFAM" id="SSF56849">
    <property type="entry name" value="delta-Endotoxin (insectocide), N-terminal domain"/>
    <property type="match status" value="1"/>
</dbReference>
<dbReference type="SUPFAM" id="SSF49785">
    <property type="entry name" value="Galactose-binding domain-like"/>
    <property type="match status" value="2"/>
</dbReference>
<comment type="function">
    <text>Endotoxin with nematicidal activity.</text>
</comment>
<comment type="developmental stage">
    <text>The crystal protein is produced during sporulation and is accumulated both as an inclusion and as part of the spore coat.</text>
</comment>
<comment type="miscellaneous">
    <text>Toxic segment of the protein is located in the N-terminus.</text>
</comment>
<comment type="similarity">
    <text evidence="1">Belongs to the delta endotoxin family.</text>
</comment>
<organism>
    <name type="scientific">Bacillus thuringiensis</name>
    <dbReference type="NCBI Taxonomy" id="1428"/>
    <lineage>
        <taxon>Bacteria</taxon>
        <taxon>Bacillati</taxon>
        <taxon>Bacillota</taxon>
        <taxon>Bacilli</taxon>
        <taxon>Bacillales</taxon>
        <taxon>Bacillaceae</taxon>
        <taxon>Bacillus</taxon>
        <taxon>Bacillus cereus group</taxon>
    </lineage>
</organism>
<proteinExistence type="evidence at protein level"/>
<sequence length="1257" mass="142266">MATLNEVYPVNYNVLSSDAFQQLDTTGFKSKYDEMIKAFEKKWKKGAKGKDLLDVAWTYITTGEIDPLNVIKGVLSVLTLIPEVGTVASAASTIVSFIWPKIFGDKPNAKNIFEELKPQIEALIQQDITNYQDAINQKKFDSLQKTINLYTVAIDNNDYVTAKTQLENLNSILTSDISIFIPEGYETGGLPYYAMVANAHILLLRDAIVNAEKLGFSDKEVDTHKKYIKMTIHNHTEAVIKAFLNGLDKFKSLDVNSYNKKANYIKGMTEMVLDLVALWPTFDPDHYQKEVEIEFTRTISSPIYQPVPKNMQNTSSSIVPSDLFHYQGDLVKLEFSTRTDNDGLAKIFTGIRNTFYKSPNTHETYHVDFSYNTQSSGNISRGSSNPIPIDLNNPIISTCIRNSFYKAIAGSSVLVNFKDGTQGYAFAQAPTGGAWDHSFIESDGAPEGHKLNYIYTSPGDTLRDFINVYTLISTPTINELSTEKIKGFPAEKGYIKNQGIMKYYGKPEYINGAQPVNLENQQTLIFEFHASKTAQYTIRIRYASTQGTKGYFRLDNQELQTLNIPTSHNGYVTGNIGENYDLYTIGSYTITEGNHTLQIQHNDKNGMVLDRIEFVPKDSLQDSPQDSPPEVHESTIIFDKSSPTIWSSNKHSYSHIHLEGSYTSQGSYPHNLLINLFHPTDPNRNHTIHVNNGDMNVDYGKDSVADGLNFNKITATIPSDAWYSGTITSMHLFNDNNFKTITPKFELSNELENITTQVNALFASSAQDTLASNVSDYWIEQVVMKVDALSDEVFGKEKKALRKLVNQAKRLSKIRNLLIGGNFDNLVAWYMGKDVVKESDHELFKSDHVLLPPPTFHPSYIFQKVEESKLKPNTRYTISGFIAHGEDVELVVSRYGQEIQKVMQVPYEEALPLTSESNSSCCVPNLNINETLADPHFFSYSIDVGSLEMEANPGIEFGLRIVKPTGMARVSNLEIREDRPLTAKEIRQVQRAARDWKQNYEQERTEITAIIQPVLNQINALYENEDWNGSIRSNVSYHDLEQIMLPTLLKTEEINCNYDHPAFLLKVYHWFMTDRIGEHGTILARFQEALDRAYTQLESRNLLHNGHFTTDTANWTIEGDAHHTILEDGRRVLRLPDWSSNATQTIEIEDFDLDQEYQLLIHAKGKGSITLQHGEENEYVETHTHHTNDFITSQNIPFTFKGNQIEVHITSEDGEFLIDHITVIEVSKTDTNTNIIENSPINTSMNSNVRVDIPRSL</sequence>
<name>C12AA_BACTU</name>